<sequence>MLRRIHDKKPLIHHLTNTVTINDCANMTLALGGSPVMAEDLLEVEEMVGLADAVVINTGTINPDMRKAQLLAGKTANRLGKPVILDPVGAGATTLRTDFMKQLMEEITFTVIKGNASEIKTLLGQAARTKGVDVAEGESLDLQSVHAFASQTKQVIVVTGPVDFVTDGVRQHHLDVGTKRLGQVTGTGCMTASLIATFLGAGYGRFDAAVFGTYAMGKAGETAGNRPGIGSFRTGLFDAVSLMTEESLPEVQMNGQ</sequence>
<comment type="function">
    <text evidence="1">Catalyzes the phosphorylation of the hydroxyl group of 4-methyl-5-beta-hydroxyethylthiazole (THZ).</text>
</comment>
<comment type="catalytic activity">
    <reaction evidence="1">
        <text>5-(2-hydroxyethyl)-4-methylthiazole + ATP = 4-methyl-5-(2-phosphooxyethyl)-thiazole + ADP + H(+)</text>
        <dbReference type="Rhea" id="RHEA:24212"/>
        <dbReference type="ChEBI" id="CHEBI:15378"/>
        <dbReference type="ChEBI" id="CHEBI:17957"/>
        <dbReference type="ChEBI" id="CHEBI:30616"/>
        <dbReference type="ChEBI" id="CHEBI:58296"/>
        <dbReference type="ChEBI" id="CHEBI:456216"/>
        <dbReference type="EC" id="2.7.1.50"/>
    </reaction>
</comment>
<comment type="cofactor">
    <cofactor evidence="1">
        <name>Mg(2+)</name>
        <dbReference type="ChEBI" id="CHEBI:18420"/>
    </cofactor>
</comment>
<comment type="pathway">
    <text evidence="1">Cofactor biosynthesis; thiamine diphosphate biosynthesis; 4-methyl-5-(2-phosphoethyl)-thiazole from 5-(2-hydroxyethyl)-4-methylthiazole: step 1/1.</text>
</comment>
<comment type="similarity">
    <text evidence="1">Belongs to the Thz kinase family.</text>
</comment>
<reference key="1">
    <citation type="submission" date="2008-04" db="EMBL/GenBank/DDBJ databases">
        <title>Complete sequence of chromosome of Exiguobacterium sibiricum 255-15.</title>
        <authorList>
            <consortium name="US DOE Joint Genome Institute"/>
            <person name="Copeland A."/>
            <person name="Lucas S."/>
            <person name="Lapidus A."/>
            <person name="Glavina del Rio T."/>
            <person name="Dalin E."/>
            <person name="Tice H."/>
            <person name="Bruce D."/>
            <person name="Goodwin L."/>
            <person name="Pitluck S."/>
            <person name="Kiss H."/>
            <person name="Chertkov O."/>
            <person name="Monk C."/>
            <person name="Brettin T."/>
            <person name="Detter J.C."/>
            <person name="Han C."/>
            <person name="Kuske C.R."/>
            <person name="Schmutz J."/>
            <person name="Larimer F."/>
            <person name="Land M."/>
            <person name="Hauser L."/>
            <person name="Kyrpides N."/>
            <person name="Mikhailova N."/>
            <person name="Vishnivetskaya T."/>
            <person name="Rodrigues D.F."/>
            <person name="Gilichinsky D."/>
            <person name="Tiedje J."/>
            <person name="Richardson P."/>
        </authorList>
    </citation>
    <scope>NUCLEOTIDE SEQUENCE [LARGE SCALE GENOMIC DNA]</scope>
    <source>
        <strain>DSM 17290 / CCUG 55495 / CIP 109462 / JCM 13490 / 255-15</strain>
    </source>
</reference>
<feature type="chain" id="PRO_0000383860" description="Hydroxyethylthiazole kinase">
    <location>
        <begin position="1"/>
        <end position="256"/>
    </location>
</feature>
<feature type="binding site" evidence="1">
    <location>
        <position position="37"/>
    </location>
    <ligand>
        <name>substrate</name>
    </ligand>
</feature>
<feature type="binding site" evidence="1">
    <location>
        <position position="113"/>
    </location>
    <ligand>
        <name>ATP</name>
        <dbReference type="ChEBI" id="CHEBI:30616"/>
    </ligand>
</feature>
<feature type="binding site" evidence="1">
    <location>
        <position position="159"/>
    </location>
    <ligand>
        <name>ATP</name>
        <dbReference type="ChEBI" id="CHEBI:30616"/>
    </ligand>
</feature>
<feature type="binding site" evidence="1">
    <location>
        <position position="186"/>
    </location>
    <ligand>
        <name>substrate</name>
    </ligand>
</feature>
<evidence type="ECO:0000255" key="1">
    <source>
        <dbReference type="HAMAP-Rule" id="MF_00228"/>
    </source>
</evidence>
<organism>
    <name type="scientific">Exiguobacterium sibiricum (strain DSM 17290 / CCUG 55495 / CIP 109462 / JCM 13490 / 255-15)</name>
    <dbReference type="NCBI Taxonomy" id="262543"/>
    <lineage>
        <taxon>Bacteria</taxon>
        <taxon>Bacillati</taxon>
        <taxon>Bacillota</taxon>
        <taxon>Bacilli</taxon>
        <taxon>Bacillales</taxon>
        <taxon>Bacillales Family XII. Incertae Sedis</taxon>
        <taxon>Exiguobacterium</taxon>
    </lineage>
</organism>
<accession>B1YJJ2</accession>
<gene>
    <name evidence="1" type="primary">thiM</name>
    <name type="ordered locus">Exig_0541</name>
</gene>
<name>THIM_EXIS2</name>
<dbReference type="EC" id="2.7.1.50" evidence="1"/>
<dbReference type="EMBL" id="CP001022">
    <property type="protein sequence ID" value="ACB60022.1"/>
    <property type="molecule type" value="Genomic_DNA"/>
</dbReference>
<dbReference type="RefSeq" id="WP_012369446.1">
    <property type="nucleotide sequence ID" value="NC_010556.1"/>
</dbReference>
<dbReference type="SMR" id="B1YJJ2"/>
<dbReference type="STRING" id="262543.Exig_0541"/>
<dbReference type="KEGG" id="esi:Exig_0541"/>
<dbReference type="eggNOG" id="COG2145">
    <property type="taxonomic scope" value="Bacteria"/>
</dbReference>
<dbReference type="HOGENOM" id="CLU_019943_0_0_9"/>
<dbReference type="OrthoDB" id="9778146at2"/>
<dbReference type="UniPathway" id="UPA00060">
    <property type="reaction ID" value="UER00139"/>
</dbReference>
<dbReference type="Proteomes" id="UP000001681">
    <property type="component" value="Chromosome"/>
</dbReference>
<dbReference type="GO" id="GO:0005524">
    <property type="term" value="F:ATP binding"/>
    <property type="evidence" value="ECO:0007669"/>
    <property type="project" value="UniProtKB-UniRule"/>
</dbReference>
<dbReference type="GO" id="GO:0004417">
    <property type="term" value="F:hydroxyethylthiazole kinase activity"/>
    <property type="evidence" value="ECO:0007669"/>
    <property type="project" value="UniProtKB-UniRule"/>
</dbReference>
<dbReference type="GO" id="GO:0000287">
    <property type="term" value="F:magnesium ion binding"/>
    <property type="evidence" value="ECO:0007669"/>
    <property type="project" value="UniProtKB-UniRule"/>
</dbReference>
<dbReference type="GO" id="GO:0009228">
    <property type="term" value="P:thiamine biosynthetic process"/>
    <property type="evidence" value="ECO:0007669"/>
    <property type="project" value="UniProtKB-KW"/>
</dbReference>
<dbReference type="GO" id="GO:0009229">
    <property type="term" value="P:thiamine diphosphate biosynthetic process"/>
    <property type="evidence" value="ECO:0007669"/>
    <property type="project" value="UniProtKB-UniRule"/>
</dbReference>
<dbReference type="CDD" id="cd01170">
    <property type="entry name" value="THZ_kinase"/>
    <property type="match status" value="1"/>
</dbReference>
<dbReference type="Gene3D" id="3.40.1190.20">
    <property type="match status" value="1"/>
</dbReference>
<dbReference type="HAMAP" id="MF_00228">
    <property type="entry name" value="Thz_kinase"/>
    <property type="match status" value="1"/>
</dbReference>
<dbReference type="InterPro" id="IPR000417">
    <property type="entry name" value="Hyethyz_kinase"/>
</dbReference>
<dbReference type="InterPro" id="IPR029056">
    <property type="entry name" value="Ribokinase-like"/>
</dbReference>
<dbReference type="NCBIfam" id="NF006830">
    <property type="entry name" value="PRK09355.1"/>
    <property type="match status" value="1"/>
</dbReference>
<dbReference type="Pfam" id="PF02110">
    <property type="entry name" value="HK"/>
    <property type="match status" value="1"/>
</dbReference>
<dbReference type="PIRSF" id="PIRSF000513">
    <property type="entry name" value="Thz_kinase"/>
    <property type="match status" value="1"/>
</dbReference>
<dbReference type="PRINTS" id="PR01099">
    <property type="entry name" value="HYETHTZKNASE"/>
</dbReference>
<dbReference type="SUPFAM" id="SSF53613">
    <property type="entry name" value="Ribokinase-like"/>
    <property type="match status" value="1"/>
</dbReference>
<proteinExistence type="inferred from homology"/>
<keyword id="KW-0067">ATP-binding</keyword>
<keyword id="KW-0418">Kinase</keyword>
<keyword id="KW-0460">Magnesium</keyword>
<keyword id="KW-0479">Metal-binding</keyword>
<keyword id="KW-0547">Nucleotide-binding</keyword>
<keyword id="KW-1185">Reference proteome</keyword>
<keyword id="KW-0784">Thiamine biosynthesis</keyword>
<keyword id="KW-0808">Transferase</keyword>
<protein>
    <recommendedName>
        <fullName evidence="1">Hydroxyethylthiazole kinase</fullName>
        <ecNumber evidence="1">2.7.1.50</ecNumber>
    </recommendedName>
    <alternativeName>
        <fullName evidence="1">4-methyl-5-beta-hydroxyethylthiazole kinase</fullName>
        <shortName evidence="1">TH kinase</shortName>
        <shortName evidence="1">Thz kinase</shortName>
    </alternativeName>
</protein>